<evidence type="ECO:0000255" key="1">
    <source>
        <dbReference type="HAMAP-Rule" id="MF_00303"/>
    </source>
</evidence>
<comment type="function">
    <text evidence="1">Involved in protein export. Acts as a chaperone by maintaining the newly synthesized protein in an open conformation. Functions as a peptidyl-prolyl cis-trans isomerase.</text>
</comment>
<comment type="catalytic activity">
    <reaction evidence="1">
        <text>[protein]-peptidylproline (omega=180) = [protein]-peptidylproline (omega=0)</text>
        <dbReference type="Rhea" id="RHEA:16237"/>
        <dbReference type="Rhea" id="RHEA-COMP:10747"/>
        <dbReference type="Rhea" id="RHEA-COMP:10748"/>
        <dbReference type="ChEBI" id="CHEBI:83833"/>
        <dbReference type="ChEBI" id="CHEBI:83834"/>
        <dbReference type="EC" id="5.2.1.8"/>
    </reaction>
</comment>
<comment type="subcellular location">
    <subcellularLocation>
        <location>Cytoplasm</location>
    </subcellularLocation>
    <text evidence="1">About half TF is bound to the ribosome near the polypeptide exit tunnel while the other half is free in the cytoplasm.</text>
</comment>
<comment type="domain">
    <text evidence="1">Consists of 3 domains; the N-terminus binds the ribosome, the middle domain has PPIase activity, while the C-terminus has intrinsic chaperone activity on its own.</text>
</comment>
<comment type="similarity">
    <text evidence="1">Belongs to the FKBP-type PPIase family. Tig subfamily.</text>
</comment>
<proteinExistence type="inferred from homology"/>
<dbReference type="EC" id="5.2.1.8" evidence="1"/>
<dbReference type="EMBL" id="AE017263">
    <property type="protein sequence ID" value="AAT75764.1"/>
    <property type="molecule type" value="Genomic_DNA"/>
</dbReference>
<dbReference type="RefSeq" id="WP_011183304.1">
    <property type="nucleotide sequence ID" value="NC_006055.1"/>
</dbReference>
<dbReference type="RefSeq" id="YP_053648.1">
    <property type="nucleotide sequence ID" value="NC_006055.1"/>
</dbReference>
<dbReference type="SMR" id="Q6F159"/>
<dbReference type="STRING" id="265311.Mfl405"/>
<dbReference type="PaxDb" id="265311-Mfl405"/>
<dbReference type="EnsemblBacteria" id="AAT75764">
    <property type="protein sequence ID" value="AAT75764"/>
    <property type="gene ID" value="Mfl405"/>
</dbReference>
<dbReference type="GeneID" id="2897708"/>
<dbReference type="KEGG" id="mfl:Mfl405"/>
<dbReference type="PATRIC" id="fig|265311.5.peg.405"/>
<dbReference type="eggNOG" id="COG0544">
    <property type="taxonomic scope" value="Bacteria"/>
</dbReference>
<dbReference type="HOGENOM" id="CLU_033058_3_2_14"/>
<dbReference type="OrthoDB" id="9767721at2"/>
<dbReference type="Proteomes" id="UP000006647">
    <property type="component" value="Chromosome"/>
</dbReference>
<dbReference type="GO" id="GO:0005737">
    <property type="term" value="C:cytoplasm"/>
    <property type="evidence" value="ECO:0007669"/>
    <property type="project" value="UniProtKB-SubCell"/>
</dbReference>
<dbReference type="GO" id="GO:0003755">
    <property type="term" value="F:peptidyl-prolyl cis-trans isomerase activity"/>
    <property type="evidence" value="ECO:0007669"/>
    <property type="project" value="UniProtKB-UniRule"/>
</dbReference>
<dbReference type="GO" id="GO:0051301">
    <property type="term" value="P:cell division"/>
    <property type="evidence" value="ECO:0007669"/>
    <property type="project" value="UniProtKB-KW"/>
</dbReference>
<dbReference type="GO" id="GO:0006457">
    <property type="term" value="P:protein folding"/>
    <property type="evidence" value="ECO:0007669"/>
    <property type="project" value="UniProtKB-UniRule"/>
</dbReference>
<dbReference type="GO" id="GO:0015031">
    <property type="term" value="P:protein transport"/>
    <property type="evidence" value="ECO:0007669"/>
    <property type="project" value="UniProtKB-UniRule"/>
</dbReference>
<dbReference type="FunFam" id="3.10.50.40:FF:000001">
    <property type="entry name" value="Trigger factor"/>
    <property type="match status" value="1"/>
</dbReference>
<dbReference type="Gene3D" id="3.10.50.40">
    <property type="match status" value="1"/>
</dbReference>
<dbReference type="Gene3D" id="3.30.70.1050">
    <property type="entry name" value="Trigger factor ribosome-binding domain"/>
    <property type="match status" value="1"/>
</dbReference>
<dbReference type="Gene3D" id="1.10.3120.10">
    <property type="entry name" value="Trigger factor, C-terminal domain"/>
    <property type="match status" value="1"/>
</dbReference>
<dbReference type="HAMAP" id="MF_00303">
    <property type="entry name" value="Trigger_factor_Tig"/>
    <property type="match status" value="1"/>
</dbReference>
<dbReference type="InterPro" id="IPR046357">
    <property type="entry name" value="PPIase_dom_sf"/>
</dbReference>
<dbReference type="InterPro" id="IPR001179">
    <property type="entry name" value="PPIase_FKBP_dom"/>
</dbReference>
<dbReference type="InterPro" id="IPR005215">
    <property type="entry name" value="Trig_fac"/>
</dbReference>
<dbReference type="InterPro" id="IPR008880">
    <property type="entry name" value="Trigger_fac_C"/>
</dbReference>
<dbReference type="InterPro" id="IPR037041">
    <property type="entry name" value="Trigger_fac_C_sf"/>
</dbReference>
<dbReference type="InterPro" id="IPR008881">
    <property type="entry name" value="Trigger_fac_ribosome-bd_bac"/>
</dbReference>
<dbReference type="InterPro" id="IPR036611">
    <property type="entry name" value="Trigger_fac_ribosome-bd_sf"/>
</dbReference>
<dbReference type="InterPro" id="IPR027304">
    <property type="entry name" value="Trigger_fact/SurA_dom_sf"/>
</dbReference>
<dbReference type="NCBIfam" id="TIGR00115">
    <property type="entry name" value="tig"/>
    <property type="match status" value="1"/>
</dbReference>
<dbReference type="Pfam" id="PF00254">
    <property type="entry name" value="FKBP_C"/>
    <property type="match status" value="1"/>
</dbReference>
<dbReference type="Pfam" id="PF05698">
    <property type="entry name" value="Trigger_C"/>
    <property type="match status" value="1"/>
</dbReference>
<dbReference type="Pfam" id="PF05697">
    <property type="entry name" value="Trigger_N"/>
    <property type="match status" value="1"/>
</dbReference>
<dbReference type="PIRSF" id="PIRSF003095">
    <property type="entry name" value="Trigger_factor"/>
    <property type="match status" value="1"/>
</dbReference>
<dbReference type="SUPFAM" id="SSF54534">
    <property type="entry name" value="FKBP-like"/>
    <property type="match status" value="1"/>
</dbReference>
<dbReference type="SUPFAM" id="SSF109998">
    <property type="entry name" value="Triger factor/SurA peptide-binding domain-like"/>
    <property type="match status" value="1"/>
</dbReference>
<dbReference type="SUPFAM" id="SSF102735">
    <property type="entry name" value="Trigger factor ribosome-binding domain"/>
    <property type="match status" value="1"/>
</dbReference>
<dbReference type="PROSITE" id="PS50059">
    <property type="entry name" value="FKBP_PPIASE"/>
    <property type="match status" value="1"/>
</dbReference>
<name>TIG_MESFL</name>
<sequence length="426" mass="48062">MKFTELKIIEQGQGKWTVTIDGTEWTETLKKAKNRVLANLEVPGFRKGKIPAAQAEKYVTPSKIYNEAYRMMVSPAFDFARAQEVKVEPMNSPEPIPAKVSEKELVIEFLFDLKPEIKLGDYKNIKTVKKETVEVTKEEIEAVIDQYCEQFIMEKPKAADAKIEKGDIVTFDFKGFMNGEAFKGGEAKGHKLVIGSNQFIPGFEDSMIGLGLGEAKIDVTFPEGYTPELANKPATFELNIIEVKARELPKKDDELVKDLNLPNVETFAQFEAKVKEDITKQKLQNVKNQFVNDLINEIIKNSTIELPKTAIENQTADLRKEFEAQLKQQGLDIKKYKKVTGLSDEAIKAELTADAKNKLETYLVTSEIRSKEKFEVTEEAINAKFENLAAQFGIPADQIKTMVNPEMLKSEIVNDLLVDFLYSNNG</sequence>
<gene>
    <name evidence="1" type="primary">tig</name>
    <name type="ordered locus">Mfl405</name>
</gene>
<accession>Q6F159</accession>
<protein>
    <recommendedName>
        <fullName evidence="1">Trigger factor</fullName>
        <shortName evidence="1">TF</shortName>
        <ecNumber evidence="1">5.2.1.8</ecNumber>
    </recommendedName>
    <alternativeName>
        <fullName evidence="1">PPIase</fullName>
    </alternativeName>
</protein>
<reference key="1">
    <citation type="submission" date="2004-06" db="EMBL/GenBank/DDBJ databases">
        <authorList>
            <person name="Birren B.W."/>
            <person name="Stange-Thomann N."/>
            <person name="Hafez N."/>
            <person name="DeCaprio D."/>
            <person name="Fisher S."/>
            <person name="Butler J."/>
            <person name="Elkins T."/>
            <person name="Kodira C.D."/>
            <person name="Major J."/>
            <person name="Wang S."/>
            <person name="Nicol R."/>
            <person name="Nusbaum C."/>
        </authorList>
    </citation>
    <scope>NUCLEOTIDE SEQUENCE [LARGE SCALE GENOMIC DNA]</scope>
    <source>
        <strain>ATCC 33453 / NBRC 100688 / NCTC 11704 / L1</strain>
    </source>
</reference>
<feature type="chain" id="PRO_0000179379" description="Trigger factor">
    <location>
        <begin position="1"/>
        <end position="426"/>
    </location>
</feature>
<feature type="domain" description="PPIase FKBP-type" evidence="1">
    <location>
        <begin position="166"/>
        <end position="249"/>
    </location>
</feature>
<keyword id="KW-0131">Cell cycle</keyword>
<keyword id="KW-0132">Cell division</keyword>
<keyword id="KW-0143">Chaperone</keyword>
<keyword id="KW-0963">Cytoplasm</keyword>
<keyword id="KW-0413">Isomerase</keyword>
<keyword id="KW-1185">Reference proteome</keyword>
<keyword id="KW-0697">Rotamase</keyword>
<organism>
    <name type="scientific">Mesoplasma florum (strain ATCC 33453 / NBRC 100688 / NCTC 11704 / L1)</name>
    <name type="common">Acholeplasma florum</name>
    <dbReference type="NCBI Taxonomy" id="265311"/>
    <lineage>
        <taxon>Bacteria</taxon>
        <taxon>Bacillati</taxon>
        <taxon>Mycoplasmatota</taxon>
        <taxon>Mollicutes</taxon>
        <taxon>Entomoplasmatales</taxon>
        <taxon>Entomoplasmataceae</taxon>
        <taxon>Mesoplasma</taxon>
    </lineage>
</organism>